<reference key="1">
    <citation type="journal article" date="1999" name="DNA Res.">
        <title>Complete genome sequence of an aerobic hyper-thermophilic crenarchaeon, Aeropyrum pernix K1.</title>
        <authorList>
            <person name="Kawarabayasi Y."/>
            <person name="Hino Y."/>
            <person name="Horikawa H."/>
            <person name="Yamazaki S."/>
            <person name="Haikawa Y."/>
            <person name="Jin-no K."/>
            <person name="Takahashi M."/>
            <person name="Sekine M."/>
            <person name="Baba S."/>
            <person name="Ankai A."/>
            <person name="Kosugi H."/>
            <person name="Hosoyama A."/>
            <person name="Fukui S."/>
            <person name="Nagai Y."/>
            <person name="Nishijima K."/>
            <person name="Nakazawa H."/>
            <person name="Takamiya M."/>
            <person name="Masuda S."/>
            <person name="Funahashi T."/>
            <person name="Tanaka T."/>
            <person name="Kudoh Y."/>
            <person name="Yamazaki J."/>
            <person name="Kushida N."/>
            <person name="Oguchi A."/>
            <person name="Aoki K."/>
            <person name="Kubota K."/>
            <person name="Nakamura Y."/>
            <person name="Nomura N."/>
            <person name="Sako Y."/>
            <person name="Kikuchi H."/>
        </authorList>
    </citation>
    <scope>NUCLEOTIDE SEQUENCE [LARGE SCALE GENOMIC DNA]</scope>
    <source>
        <strain>ATCC 700893 / DSM 11879 / JCM 9820 / NBRC 100138 / K1</strain>
    </source>
</reference>
<gene>
    <name type="ordered locus">APE_1571.1</name>
</gene>
<organism>
    <name type="scientific">Aeropyrum pernix (strain ATCC 700893 / DSM 11879 / JCM 9820 / NBRC 100138 / K1)</name>
    <dbReference type="NCBI Taxonomy" id="272557"/>
    <lineage>
        <taxon>Archaea</taxon>
        <taxon>Thermoproteota</taxon>
        <taxon>Thermoprotei</taxon>
        <taxon>Desulfurococcales</taxon>
        <taxon>Desulfurococcaceae</taxon>
        <taxon>Aeropyrum</taxon>
    </lineage>
</organism>
<comment type="similarity">
    <text evidence="1">Belongs to the UbiD family.</text>
</comment>
<name>Y1571_AERPE</name>
<accession>Q9YBM7</accession>
<evidence type="ECO:0000305" key="1"/>
<sequence length="487" mass="54243">MKPIADLRSYLEFLESKDMLRRVSVEASPILEIPEILRRIMYRGSGYAVLFEKVKGHEGFRIAGNIFCSLDVVRQALGVERLEVIGERLFEPLKGPPPLGIGGKLRSLGEVLSLGKYMPKAVGRAGFTANVLEGREASFNLIPAFKVWPKDGGRYLTYALVHVRDPVRGVMNMGVYRVMIAGDKEGVVHWQIHKRGMQAQQDSVEKGERRIPAALVIGSDPGTLLTGAMPVPYPIDKHLFAGVVRGEGLPVYRLPNGIHVPANAEIVLEGYIDLEDLREEGPYGDHFGYYDKPSRLFPTFRLERVWHREEPIYYGSVTGKPPLEDVVIGKFAERIFLPAIQTLLPEVVDIDLPPHGVFQGMAFVSIRKRYPGHGKKALLALMGLGQLSLTKIIVVVDHDINVHDVNQVIWAVSSHVDPQRDVLVVPHSHTDELDPATPTPMYGSKLGIDATRKLPEEYGGKQWPEEVAPDPETVRLVEGRWGEYGLD</sequence>
<protein>
    <recommendedName>
        <fullName>Uncharacterized protein APE_1571.1</fullName>
    </recommendedName>
</protein>
<keyword id="KW-1185">Reference proteome</keyword>
<feature type="chain" id="PRO_0000157379" description="Uncharacterized protein APE_1571.1">
    <location>
        <begin position="1"/>
        <end position="487"/>
    </location>
</feature>
<proteinExistence type="inferred from homology"/>
<dbReference type="EMBL" id="BA000002">
    <property type="protein sequence ID" value="BAA80571.2"/>
    <property type="molecule type" value="Genomic_DNA"/>
</dbReference>
<dbReference type="PIR" id="F72535">
    <property type="entry name" value="F72535"/>
</dbReference>
<dbReference type="RefSeq" id="WP_010866457.1">
    <property type="nucleotide sequence ID" value="NC_000854.2"/>
</dbReference>
<dbReference type="SMR" id="Q9YBM7"/>
<dbReference type="STRING" id="272557.APE_1571.1"/>
<dbReference type="EnsemblBacteria" id="BAA80571">
    <property type="protein sequence ID" value="BAA80571"/>
    <property type="gene ID" value="APE_1571.1"/>
</dbReference>
<dbReference type="GeneID" id="1446104"/>
<dbReference type="KEGG" id="ape:APE_1571.1"/>
<dbReference type="PATRIC" id="fig|272557.25.peg.1060"/>
<dbReference type="eggNOG" id="arCOG01671">
    <property type="taxonomic scope" value="Archaea"/>
</dbReference>
<dbReference type="Proteomes" id="UP000002518">
    <property type="component" value="Chromosome"/>
</dbReference>
<dbReference type="GO" id="GO:0005737">
    <property type="term" value="C:cytoplasm"/>
    <property type="evidence" value="ECO:0007669"/>
    <property type="project" value="TreeGrafter"/>
</dbReference>
<dbReference type="GO" id="GO:0016831">
    <property type="term" value="F:carboxy-lyase activity"/>
    <property type="evidence" value="ECO:0007669"/>
    <property type="project" value="InterPro"/>
</dbReference>
<dbReference type="Gene3D" id="3.40.1670.10">
    <property type="entry name" value="UbiD C-terminal domain-like"/>
    <property type="match status" value="1"/>
</dbReference>
<dbReference type="InterPro" id="IPR002830">
    <property type="entry name" value="UbiD"/>
</dbReference>
<dbReference type="InterPro" id="IPR049381">
    <property type="entry name" value="UbiD-like_C"/>
</dbReference>
<dbReference type="InterPro" id="IPR049383">
    <property type="entry name" value="UbiD-like_N"/>
</dbReference>
<dbReference type="InterPro" id="IPR048304">
    <property type="entry name" value="UbiD_Rift_dom"/>
</dbReference>
<dbReference type="NCBIfam" id="TIGR00148">
    <property type="entry name" value="UbiD family decarboxylase"/>
    <property type="match status" value="1"/>
</dbReference>
<dbReference type="PANTHER" id="PTHR30108">
    <property type="entry name" value="3-OCTAPRENYL-4-HYDROXYBENZOATE CARBOXY-LYASE-RELATED"/>
    <property type="match status" value="1"/>
</dbReference>
<dbReference type="PANTHER" id="PTHR30108:SF17">
    <property type="entry name" value="FERULIC ACID DECARBOXYLASE 1"/>
    <property type="match status" value="1"/>
</dbReference>
<dbReference type="Pfam" id="PF01977">
    <property type="entry name" value="UbiD"/>
    <property type="match status" value="1"/>
</dbReference>
<dbReference type="Pfam" id="PF20696">
    <property type="entry name" value="UbiD_C"/>
    <property type="match status" value="1"/>
</dbReference>
<dbReference type="Pfam" id="PF20695">
    <property type="entry name" value="UbiD_N"/>
    <property type="match status" value="1"/>
</dbReference>
<dbReference type="SUPFAM" id="SSF50475">
    <property type="entry name" value="FMN-binding split barrel"/>
    <property type="match status" value="1"/>
</dbReference>
<dbReference type="SUPFAM" id="SSF143968">
    <property type="entry name" value="UbiD C-terminal domain-like"/>
    <property type="match status" value="1"/>
</dbReference>